<organism>
    <name type="scientific">Mus musculus</name>
    <name type="common">Mouse</name>
    <dbReference type="NCBI Taxonomy" id="10090"/>
    <lineage>
        <taxon>Eukaryota</taxon>
        <taxon>Metazoa</taxon>
        <taxon>Chordata</taxon>
        <taxon>Craniata</taxon>
        <taxon>Vertebrata</taxon>
        <taxon>Euteleostomi</taxon>
        <taxon>Mammalia</taxon>
        <taxon>Eutheria</taxon>
        <taxon>Euarchontoglires</taxon>
        <taxon>Glires</taxon>
        <taxon>Rodentia</taxon>
        <taxon>Myomorpha</taxon>
        <taxon>Muroidea</taxon>
        <taxon>Muridae</taxon>
        <taxon>Murinae</taxon>
        <taxon>Mus</taxon>
        <taxon>Mus</taxon>
    </lineage>
</organism>
<proteinExistence type="evidence at transcript level"/>
<evidence type="ECO:0000250" key="1"/>
<evidence type="ECO:0000255" key="2"/>
<evidence type="ECO:0000255" key="3">
    <source>
        <dbReference type="PROSITE-ProRule" id="PRU00739"/>
    </source>
</evidence>
<evidence type="ECO:0000303" key="4">
    <source>
    </source>
</evidence>
<evidence type="ECO:0000305" key="5"/>
<name>ANGL1_MOUSE</name>
<accession>Q640P2</accession>
<accession>Q3UQL1</accession>
<accession>Q9CZ81</accession>
<comment type="subcellular location">
    <subcellularLocation>
        <location evidence="1">Secreted</location>
    </subcellularLocation>
</comment>
<comment type="alternative products">
    <event type="alternative splicing"/>
    <isoform>
        <id>Q640P2-1</id>
        <name>1</name>
        <sequence type="displayed"/>
    </isoform>
    <isoform>
        <id>Q640P2-2</id>
        <name>2</name>
        <sequence type="described" ref="VSP_013722 VSP_013723"/>
    </isoform>
</comment>
<comment type="sequence caution" evidence="5">
    <conflict type="frameshift">
        <sequence resource="EMBL-CDS" id="BAB28537"/>
    </conflict>
</comment>
<sequence length="490" mass="56323">MKAFVWTLSVLLFLLGSGHCKGGQLKIKKITQRRYPRATDGKEEAKKCSYTFLVPEQKITGPICVNTKGQDAGTIKDMITRMDLENLKDVLSRQKREIDVLQLVVDVDGNIVNEVKLLRKESRNMNSRVTQLYMQLLHEIIRKRDNSLELSQLENKILNVTTEMLKMATRYRELEVKYASLTDLVNNQSVTITVLEEQCLRMFSRQDPHASPPLVQVVPRHSPNSHQYTPGLLGGNEIQRDPGYPRDVMPPPDLPTAPTKSPFKIPAVTFINEGPFKDCQQAKEAGHSASGIYMIKPENSNGLMQLWCENSLDPGGWTVIQKRTDGSVNFFRNWENYKKGFGNIDGEYWLGLDNIYKLSNQDNYKLMIELEDWSEKKVYAEYSSFRLEPESDYYRLRLGTYQGNAGDSMMWHNGKQFTTLDRDKDTYTGNCAHFHKGGWWYNACAHSNLNGVWYRGGHYRSKHQDGIFWAEYRGGSYSLRAVQMMIKPID</sequence>
<keyword id="KW-0025">Alternative splicing</keyword>
<keyword id="KW-0175">Coiled coil</keyword>
<keyword id="KW-1015">Disulfide bond</keyword>
<keyword id="KW-0325">Glycoprotein</keyword>
<keyword id="KW-1185">Reference proteome</keyword>
<keyword id="KW-0964">Secreted</keyword>
<keyword id="KW-0732">Signal</keyword>
<reference key="1">
    <citation type="journal article" date="2005" name="Science">
        <title>The transcriptional landscape of the mammalian genome.</title>
        <authorList>
            <person name="Carninci P."/>
            <person name="Kasukawa T."/>
            <person name="Katayama S."/>
            <person name="Gough J."/>
            <person name="Frith M.C."/>
            <person name="Maeda N."/>
            <person name="Oyama R."/>
            <person name="Ravasi T."/>
            <person name="Lenhard B."/>
            <person name="Wells C."/>
            <person name="Kodzius R."/>
            <person name="Shimokawa K."/>
            <person name="Bajic V.B."/>
            <person name="Brenner S.E."/>
            <person name="Batalov S."/>
            <person name="Forrest A.R."/>
            <person name="Zavolan M."/>
            <person name="Davis M.J."/>
            <person name="Wilming L.G."/>
            <person name="Aidinis V."/>
            <person name="Allen J.E."/>
            <person name="Ambesi-Impiombato A."/>
            <person name="Apweiler R."/>
            <person name="Aturaliya R.N."/>
            <person name="Bailey T.L."/>
            <person name="Bansal M."/>
            <person name="Baxter L."/>
            <person name="Beisel K.W."/>
            <person name="Bersano T."/>
            <person name="Bono H."/>
            <person name="Chalk A.M."/>
            <person name="Chiu K.P."/>
            <person name="Choudhary V."/>
            <person name="Christoffels A."/>
            <person name="Clutterbuck D.R."/>
            <person name="Crowe M.L."/>
            <person name="Dalla E."/>
            <person name="Dalrymple B.P."/>
            <person name="de Bono B."/>
            <person name="Della Gatta G."/>
            <person name="di Bernardo D."/>
            <person name="Down T."/>
            <person name="Engstrom P."/>
            <person name="Fagiolini M."/>
            <person name="Faulkner G."/>
            <person name="Fletcher C.F."/>
            <person name="Fukushima T."/>
            <person name="Furuno M."/>
            <person name="Futaki S."/>
            <person name="Gariboldi M."/>
            <person name="Georgii-Hemming P."/>
            <person name="Gingeras T.R."/>
            <person name="Gojobori T."/>
            <person name="Green R.E."/>
            <person name="Gustincich S."/>
            <person name="Harbers M."/>
            <person name="Hayashi Y."/>
            <person name="Hensch T.K."/>
            <person name="Hirokawa N."/>
            <person name="Hill D."/>
            <person name="Huminiecki L."/>
            <person name="Iacono M."/>
            <person name="Ikeo K."/>
            <person name="Iwama A."/>
            <person name="Ishikawa T."/>
            <person name="Jakt M."/>
            <person name="Kanapin A."/>
            <person name="Katoh M."/>
            <person name="Kawasawa Y."/>
            <person name="Kelso J."/>
            <person name="Kitamura H."/>
            <person name="Kitano H."/>
            <person name="Kollias G."/>
            <person name="Krishnan S.P."/>
            <person name="Kruger A."/>
            <person name="Kummerfeld S.K."/>
            <person name="Kurochkin I.V."/>
            <person name="Lareau L.F."/>
            <person name="Lazarevic D."/>
            <person name="Lipovich L."/>
            <person name="Liu J."/>
            <person name="Liuni S."/>
            <person name="McWilliam S."/>
            <person name="Madan Babu M."/>
            <person name="Madera M."/>
            <person name="Marchionni L."/>
            <person name="Matsuda H."/>
            <person name="Matsuzawa S."/>
            <person name="Miki H."/>
            <person name="Mignone F."/>
            <person name="Miyake S."/>
            <person name="Morris K."/>
            <person name="Mottagui-Tabar S."/>
            <person name="Mulder N."/>
            <person name="Nakano N."/>
            <person name="Nakauchi H."/>
            <person name="Ng P."/>
            <person name="Nilsson R."/>
            <person name="Nishiguchi S."/>
            <person name="Nishikawa S."/>
            <person name="Nori F."/>
            <person name="Ohara O."/>
            <person name="Okazaki Y."/>
            <person name="Orlando V."/>
            <person name="Pang K.C."/>
            <person name="Pavan W.J."/>
            <person name="Pavesi G."/>
            <person name="Pesole G."/>
            <person name="Petrovsky N."/>
            <person name="Piazza S."/>
            <person name="Reed J."/>
            <person name="Reid J.F."/>
            <person name="Ring B.Z."/>
            <person name="Ringwald M."/>
            <person name="Rost B."/>
            <person name="Ruan Y."/>
            <person name="Salzberg S.L."/>
            <person name="Sandelin A."/>
            <person name="Schneider C."/>
            <person name="Schoenbach C."/>
            <person name="Sekiguchi K."/>
            <person name="Semple C.A."/>
            <person name="Seno S."/>
            <person name="Sessa L."/>
            <person name="Sheng Y."/>
            <person name="Shibata Y."/>
            <person name="Shimada H."/>
            <person name="Shimada K."/>
            <person name="Silva D."/>
            <person name="Sinclair B."/>
            <person name="Sperling S."/>
            <person name="Stupka E."/>
            <person name="Sugiura K."/>
            <person name="Sultana R."/>
            <person name="Takenaka Y."/>
            <person name="Taki K."/>
            <person name="Tammoja K."/>
            <person name="Tan S.L."/>
            <person name="Tang S."/>
            <person name="Taylor M.S."/>
            <person name="Tegner J."/>
            <person name="Teichmann S.A."/>
            <person name="Ueda H.R."/>
            <person name="van Nimwegen E."/>
            <person name="Verardo R."/>
            <person name="Wei C.L."/>
            <person name="Yagi K."/>
            <person name="Yamanishi H."/>
            <person name="Zabarovsky E."/>
            <person name="Zhu S."/>
            <person name="Zimmer A."/>
            <person name="Hide W."/>
            <person name="Bult C."/>
            <person name="Grimmond S.M."/>
            <person name="Teasdale R.D."/>
            <person name="Liu E.T."/>
            <person name="Brusic V."/>
            <person name="Quackenbush J."/>
            <person name="Wahlestedt C."/>
            <person name="Mattick J.S."/>
            <person name="Hume D.A."/>
            <person name="Kai C."/>
            <person name="Sasaki D."/>
            <person name="Tomaru Y."/>
            <person name="Fukuda S."/>
            <person name="Kanamori-Katayama M."/>
            <person name="Suzuki M."/>
            <person name="Aoki J."/>
            <person name="Arakawa T."/>
            <person name="Iida J."/>
            <person name="Imamura K."/>
            <person name="Itoh M."/>
            <person name="Kato T."/>
            <person name="Kawaji H."/>
            <person name="Kawagashira N."/>
            <person name="Kawashima T."/>
            <person name="Kojima M."/>
            <person name="Kondo S."/>
            <person name="Konno H."/>
            <person name="Nakano K."/>
            <person name="Ninomiya N."/>
            <person name="Nishio T."/>
            <person name="Okada M."/>
            <person name="Plessy C."/>
            <person name="Shibata K."/>
            <person name="Shiraki T."/>
            <person name="Suzuki S."/>
            <person name="Tagami M."/>
            <person name="Waki K."/>
            <person name="Watahiki A."/>
            <person name="Okamura-Oho Y."/>
            <person name="Suzuki H."/>
            <person name="Kawai J."/>
            <person name="Hayashizaki Y."/>
        </authorList>
    </citation>
    <scope>NUCLEOTIDE SEQUENCE [LARGE SCALE MRNA] (ISOFORMS 1 AND 2)</scope>
    <source>
        <strain>C57BL/6J</strain>
        <tissue>Embryo</tissue>
        <tissue>Heart</tissue>
    </source>
</reference>
<reference key="2">
    <citation type="journal article" date="2004" name="Genome Res.">
        <title>The status, quality, and expansion of the NIH full-length cDNA project: the Mammalian Gene Collection (MGC).</title>
        <authorList>
            <consortium name="The MGC Project Team"/>
        </authorList>
    </citation>
    <scope>NUCLEOTIDE SEQUENCE [LARGE SCALE MRNA] (ISOFORM 1)</scope>
    <source>
        <strain>C57BL/6J</strain>
        <tissue>Eye</tissue>
    </source>
</reference>
<protein>
    <recommendedName>
        <fullName>Angiopoietin-related protein 1</fullName>
    </recommendedName>
    <alternativeName>
        <fullName>Angiopoietin-like protein 1</fullName>
    </alternativeName>
</protein>
<feature type="signal peptide" evidence="2">
    <location>
        <begin position="1"/>
        <end position="22"/>
    </location>
</feature>
<feature type="chain" id="PRO_0000009119" description="Angiopoietin-related protein 1">
    <location>
        <begin position="23"/>
        <end position="490"/>
    </location>
</feature>
<feature type="domain" description="Fibrinogen C-terminal" evidence="3">
    <location>
        <begin position="270"/>
        <end position="490"/>
    </location>
</feature>
<feature type="coiled-coil region" evidence="2">
    <location>
        <begin position="79"/>
        <end position="167"/>
    </location>
</feature>
<feature type="glycosylation site" description="N-linked (GlcNAc...) asparagine" evidence="2">
    <location>
        <position position="159"/>
    </location>
</feature>
<feature type="glycosylation site" description="N-linked (GlcNAc...) asparagine" evidence="2">
    <location>
        <position position="187"/>
    </location>
</feature>
<feature type="disulfide bond" evidence="3">
    <location>
        <begin position="279"/>
        <end position="308"/>
    </location>
</feature>
<feature type="disulfide bond" evidence="3">
    <location>
        <begin position="431"/>
        <end position="444"/>
    </location>
</feature>
<feature type="splice variant" id="VSP_013722" description="In isoform 2." evidence="4">
    <original>PFKDCQQAKEAGHSASGIYMIKPENSNGLMQLWCENSLDPGGWTVIQKR</original>
    <variation>ELLLPGQWKNEAGMLMLYDSRNNTLILVSPTSYVLMPLYMSNQNFHFLK</variation>
    <location>
        <begin position="275"/>
        <end position="323"/>
    </location>
</feature>
<feature type="splice variant" id="VSP_013723" description="In isoform 2." evidence="4">
    <location>
        <begin position="324"/>
        <end position="490"/>
    </location>
</feature>
<dbReference type="EMBL" id="AK012888">
    <property type="protein sequence ID" value="BAB28537.1"/>
    <property type="status" value="ALT_SEQ"/>
    <property type="molecule type" value="mRNA"/>
</dbReference>
<dbReference type="EMBL" id="AK142319">
    <property type="protein sequence ID" value="BAE25028.1"/>
    <property type="molecule type" value="mRNA"/>
</dbReference>
<dbReference type="EMBL" id="BC082563">
    <property type="protein sequence ID" value="AAH82563.1"/>
    <property type="molecule type" value="mRNA"/>
</dbReference>
<dbReference type="CCDS" id="CCDS15397.1">
    <molecule id="Q640P2-1"/>
</dbReference>
<dbReference type="RefSeq" id="NP_082609.2">
    <molecule id="Q640P2-1"/>
    <property type="nucleotide sequence ID" value="NM_028333.3"/>
</dbReference>
<dbReference type="SMR" id="Q640P2"/>
<dbReference type="FunCoup" id="Q640P2">
    <property type="interactions" value="180"/>
</dbReference>
<dbReference type="STRING" id="10090.ENSMUSP00000027885"/>
<dbReference type="GlyCosmos" id="Q640P2">
    <property type="glycosylation" value="2 sites, No reported glycans"/>
</dbReference>
<dbReference type="GlyGen" id="Q640P2">
    <property type="glycosylation" value="2 sites, 1 N-linked glycan (1 site)"/>
</dbReference>
<dbReference type="iPTMnet" id="Q640P2"/>
<dbReference type="PhosphoSitePlus" id="Q640P2"/>
<dbReference type="PaxDb" id="10090-ENSMUSP00000027885"/>
<dbReference type="PeptideAtlas" id="Q640P2"/>
<dbReference type="ProteomicsDB" id="282102">
    <molecule id="Q640P2-1"/>
</dbReference>
<dbReference type="ProteomicsDB" id="282103">
    <molecule id="Q640P2-2"/>
</dbReference>
<dbReference type="Antibodypedia" id="1217">
    <property type="antibodies" value="420 antibodies from 30 providers"/>
</dbReference>
<dbReference type="DNASU" id="72713"/>
<dbReference type="Ensembl" id="ENSMUST00000027885.8">
    <molecule id="Q640P2-1"/>
    <property type="protein sequence ID" value="ENSMUSP00000027885.8"/>
    <property type="gene ID" value="ENSMUSG00000033544.7"/>
</dbReference>
<dbReference type="Ensembl" id="ENSMUST00000111720.2">
    <molecule id="Q640P2-2"/>
    <property type="protein sequence ID" value="ENSMUSP00000107349.2"/>
    <property type="gene ID" value="ENSMUSG00000033544.7"/>
</dbReference>
<dbReference type="GeneID" id="72713"/>
<dbReference type="KEGG" id="mmu:72713"/>
<dbReference type="UCSC" id="uc007ddc.1">
    <molecule id="Q640P2-2"/>
    <property type="organism name" value="mouse"/>
</dbReference>
<dbReference type="UCSC" id="uc007ddd.2">
    <molecule id="Q640P2-1"/>
    <property type="organism name" value="mouse"/>
</dbReference>
<dbReference type="AGR" id="MGI:1919963"/>
<dbReference type="CTD" id="9068"/>
<dbReference type="MGI" id="MGI:1919963">
    <property type="gene designation" value="Angptl1"/>
</dbReference>
<dbReference type="VEuPathDB" id="HostDB:ENSMUSG00000033544"/>
<dbReference type="eggNOG" id="KOG2579">
    <property type="taxonomic scope" value="Eukaryota"/>
</dbReference>
<dbReference type="GeneTree" id="ENSGT00940000155091"/>
<dbReference type="HOGENOM" id="CLU_038628_0_0_1"/>
<dbReference type="InParanoid" id="Q640P2"/>
<dbReference type="OMA" id="CQHAKDA"/>
<dbReference type="OrthoDB" id="7871457at2759"/>
<dbReference type="PhylomeDB" id="Q640P2"/>
<dbReference type="TreeFam" id="TF336658"/>
<dbReference type="BioGRID-ORCS" id="72713">
    <property type="hits" value="3 hits in 77 CRISPR screens"/>
</dbReference>
<dbReference type="ChiTaRS" id="Angptl1">
    <property type="organism name" value="mouse"/>
</dbReference>
<dbReference type="PRO" id="PR:Q640P2"/>
<dbReference type="Proteomes" id="UP000000589">
    <property type="component" value="Chromosome 1"/>
</dbReference>
<dbReference type="RNAct" id="Q640P2">
    <property type="molecule type" value="protein"/>
</dbReference>
<dbReference type="Bgee" id="ENSMUSG00000033544">
    <property type="expression patterns" value="Expressed in jaw mesenchyme and 155 other cell types or tissues"/>
</dbReference>
<dbReference type="GO" id="GO:0005615">
    <property type="term" value="C:extracellular space"/>
    <property type="evidence" value="ECO:0000266"/>
    <property type="project" value="MGI"/>
</dbReference>
<dbReference type="GO" id="GO:0005102">
    <property type="term" value="F:signaling receptor binding"/>
    <property type="evidence" value="ECO:0000353"/>
    <property type="project" value="MGI"/>
</dbReference>
<dbReference type="GO" id="GO:0007596">
    <property type="term" value="P:blood coagulation"/>
    <property type="evidence" value="ECO:0007669"/>
    <property type="project" value="InterPro"/>
</dbReference>
<dbReference type="GO" id="GO:0007169">
    <property type="term" value="P:cell surface receptor protein tyrosine kinase signaling pathway"/>
    <property type="evidence" value="ECO:0000353"/>
    <property type="project" value="MGI"/>
</dbReference>
<dbReference type="CDD" id="cd00087">
    <property type="entry name" value="FReD"/>
    <property type="match status" value="1"/>
</dbReference>
<dbReference type="FunFam" id="3.90.215.10:FF:000001">
    <property type="entry name" value="Tenascin isoform 1"/>
    <property type="match status" value="1"/>
</dbReference>
<dbReference type="Gene3D" id="3.90.215.10">
    <property type="entry name" value="Gamma Fibrinogen, chain A, domain 1"/>
    <property type="match status" value="1"/>
</dbReference>
<dbReference type="InterPro" id="IPR037579">
    <property type="entry name" value="FIB_ANG-like"/>
</dbReference>
<dbReference type="InterPro" id="IPR036056">
    <property type="entry name" value="Fibrinogen-like_C"/>
</dbReference>
<dbReference type="InterPro" id="IPR014716">
    <property type="entry name" value="Fibrinogen_a/b/g_C_1"/>
</dbReference>
<dbReference type="InterPro" id="IPR002181">
    <property type="entry name" value="Fibrinogen_a/b/g_C_dom"/>
</dbReference>
<dbReference type="InterPro" id="IPR020837">
    <property type="entry name" value="Fibrinogen_CS"/>
</dbReference>
<dbReference type="NCBIfam" id="NF040941">
    <property type="entry name" value="GGGWT_bact"/>
    <property type="match status" value="1"/>
</dbReference>
<dbReference type="PANTHER" id="PTHR47221">
    <property type="entry name" value="FIBRINOGEN ALPHA CHAIN"/>
    <property type="match status" value="1"/>
</dbReference>
<dbReference type="PANTHER" id="PTHR47221:SF6">
    <property type="entry name" value="FIBRINOGEN ALPHA CHAIN"/>
    <property type="match status" value="1"/>
</dbReference>
<dbReference type="Pfam" id="PF00147">
    <property type="entry name" value="Fibrinogen_C"/>
    <property type="match status" value="1"/>
</dbReference>
<dbReference type="SMART" id="SM00186">
    <property type="entry name" value="FBG"/>
    <property type="match status" value="1"/>
</dbReference>
<dbReference type="SUPFAM" id="SSF56496">
    <property type="entry name" value="Fibrinogen C-terminal domain-like"/>
    <property type="match status" value="1"/>
</dbReference>
<dbReference type="PROSITE" id="PS00514">
    <property type="entry name" value="FIBRINOGEN_C_1"/>
    <property type="match status" value="1"/>
</dbReference>
<dbReference type="PROSITE" id="PS51406">
    <property type="entry name" value="FIBRINOGEN_C_2"/>
    <property type="match status" value="1"/>
</dbReference>
<gene>
    <name type="primary">Angptl1</name>
</gene>